<evidence type="ECO:0000250" key="1">
    <source>
        <dbReference type="UniProtKB" id="Q9FKA4"/>
    </source>
</evidence>
<evidence type="ECO:0000255" key="2">
    <source>
        <dbReference type="PROSITE-ProRule" id="PRU00297"/>
    </source>
</evidence>
<evidence type="ECO:0000305" key="3"/>
<dbReference type="EC" id="1.11.1.7"/>
<dbReference type="GO" id="GO:0140825">
    <property type="term" value="F:lactoperoxidase activity"/>
    <property type="evidence" value="ECO:0007669"/>
    <property type="project" value="UniProtKB-EC"/>
</dbReference>
<dbReference type="GO" id="GO:0046872">
    <property type="term" value="F:metal ion binding"/>
    <property type="evidence" value="ECO:0007669"/>
    <property type="project" value="UniProtKB-KW"/>
</dbReference>
<dbReference type="GO" id="GO:0042744">
    <property type="term" value="P:hydrogen peroxide catabolic process"/>
    <property type="evidence" value="ECO:0007669"/>
    <property type="project" value="UniProtKB-KW"/>
</dbReference>
<accession>P86058</accession>
<protein>
    <recommendedName>
        <fullName evidence="1">Peroxidase 5</fullName>
        <ecNumber>1.11.1.7</ecNumber>
    </recommendedName>
</protein>
<comment type="function">
    <text evidence="2">Removal of H(2)O(2), oxidation of toxic reductants, biosynthesis and degradation of lignin, suberization, auxin catabolism, response to environmental stresses such as wounding, pathogen attack and oxidative stress. These functions might be dependent on each isozyme/isoform in each plant tissue.</text>
</comment>
<comment type="catalytic activity">
    <reaction>
        <text>2 a phenolic donor + H2O2 = 2 a phenolic radical donor + 2 H2O</text>
        <dbReference type="Rhea" id="RHEA:56136"/>
        <dbReference type="ChEBI" id="CHEBI:15377"/>
        <dbReference type="ChEBI" id="CHEBI:16240"/>
        <dbReference type="ChEBI" id="CHEBI:139520"/>
        <dbReference type="ChEBI" id="CHEBI:139521"/>
        <dbReference type="EC" id="1.11.1.7"/>
    </reaction>
</comment>
<comment type="cofactor">
    <cofactor evidence="1 2">
        <name>Ca(2+)</name>
        <dbReference type="ChEBI" id="CHEBI:29108"/>
    </cofactor>
    <text evidence="1 2">Binds 2 calcium ions per subunit.</text>
</comment>
<comment type="cofactor">
    <cofactor evidence="1 2">
        <name>heme b</name>
        <dbReference type="ChEBI" id="CHEBI:60344"/>
    </cofactor>
    <text evidence="1 2">Binds 1 heme b (iron(II)-protoporphyrin IX) group per subunit.</text>
</comment>
<comment type="similarity">
    <text evidence="2">Belongs to the peroxidase family. Classical plant (class III) peroxidase subfamily.</text>
</comment>
<keyword id="KW-0106">Calcium</keyword>
<keyword id="KW-0903">Direct protein sequencing</keyword>
<keyword id="KW-0349">Heme</keyword>
<keyword id="KW-0376">Hydrogen peroxide</keyword>
<keyword id="KW-0408">Iron</keyword>
<keyword id="KW-0479">Metal-binding</keyword>
<keyword id="KW-0560">Oxidoreductase</keyword>
<keyword id="KW-0575">Peroxidase</keyword>
<reference evidence="3" key="1">
    <citation type="submission" date="2008-07" db="UniProtKB">
        <authorList>
            <person name="Sabater Jara A.B."/>
            <person name="Almagro L."/>
            <person name="Gomez Ros L.V."/>
            <person name="Ros Barcelo A."/>
        </authorList>
    </citation>
    <scope>PROTEIN SEQUENCE</scope>
</reference>
<organism>
    <name type="scientific">Daucus carota</name>
    <name type="common">Wild carrot</name>
    <dbReference type="NCBI Taxonomy" id="4039"/>
    <lineage>
        <taxon>Eukaryota</taxon>
        <taxon>Viridiplantae</taxon>
        <taxon>Streptophyta</taxon>
        <taxon>Embryophyta</taxon>
        <taxon>Tracheophyta</taxon>
        <taxon>Spermatophyta</taxon>
        <taxon>Magnoliopsida</taxon>
        <taxon>eudicotyledons</taxon>
        <taxon>Gunneridae</taxon>
        <taxon>Pentapetalae</taxon>
        <taxon>asterids</taxon>
        <taxon>campanulids</taxon>
        <taxon>Apiales</taxon>
        <taxon>Apiaceae</taxon>
        <taxon>Apioideae</taxon>
        <taxon>Scandiceae</taxon>
        <taxon>Daucinae</taxon>
        <taxon>Daucus</taxon>
        <taxon>Daucus sect. Daucus</taxon>
    </lineage>
</organism>
<feature type="chain" id="PRO_0000355597" description="Peroxidase 5">
    <location>
        <begin position="1" status="less than"/>
        <end position="17" status="greater than"/>
    </location>
</feature>
<feature type="unsure residue" description="L or I">
    <location>
        <position position="2"/>
    </location>
</feature>
<feature type="unsure residue" description="M or F">
    <location>
        <position position="10"/>
    </location>
</feature>
<feature type="unsure residue" description="Q or K">
    <location>
        <position position="12"/>
    </location>
</feature>
<feature type="unsure residue" description="F or M">
    <location>
        <position position="14"/>
    </location>
</feature>
<feature type="non-terminal residue">
    <location>
        <position position="1"/>
    </location>
</feature>
<feature type="non-terminal residue">
    <location>
        <position position="17"/>
    </location>
</feature>
<sequence>YLGPTADSTMDQTFANN</sequence>
<proteinExistence type="evidence at protein level"/>
<name>PER5_DAUCA</name>